<organism>
    <name type="scientific">Escherichia coli (strain SMS-3-5 / SECEC)</name>
    <dbReference type="NCBI Taxonomy" id="439855"/>
    <lineage>
        <taxon>Bacteria</taxon>
        <taxon>Pseudomonadati</taxon>
        <taxon>Pseudomonadota</taxon>
        <taxon>Gammaproteobacteria</taxon>
        <taxon>Enterobacterales</taxon>
        <taxon>Enterobacteriaceae</taxon>
        <taxon>Escherichia</taxon>
    </lineage>
</organism>
<dbReference type="EC" id="3.1.2.-" evidence="1"/>
<dbReference type="EC" id="3.5.1.-" evidence="1"/>
<dbReference type="EC" id="3.5.1.124" evidence="1"/>
<dbReference type="EMBL" id="CP000970">
    <property type="protein sequence ID" value="ACB20144.1"/>
    <property type="molecule type" value="Genomic_DNA"/>
</dbReference>
<dbReference type="RefSeq" id="WP_000218214.1">
    <property type="nucleotide sequence ID" value="NC_010498.1"/>
</dbReference>
<dbReference type="SMR" id="B1LQP2"/>
<dbReference type="MEROPS" id="C56.006"/>
<dbReference type="GeneID" id="75205795"/>
<dbReference type="KEGG" id="ecm:EcSMS35_1218"/>
<dbReference type="HOGENOM" id="CLU_066933_0_0_6"/>
<dbReference type="Proteomes" id="UP000007011">
    <property type="component" value="Chromosome"/>
</dbReference>
<dbReference type="GO" id="GO:0005737">
    <property type="term" value="C:cytoplasm"/>
    <property type="evidence" value="ECO:0007669"/>
    <property type="project" value="UniProtKB-SubCell"/>
</dbReference>
<dbReference type="GO" id="GO:0019172">
    <property type="term" value="F:glyoxalase III activity"/>
    <property type="evidence" value="ECO:0007669"/>
    <property type="project" value="TreeGrafter"/>
</dbReference>
<dbReference type="GO" id="GO:0036524">
    <property type="term" value="F:protein deglycase activity"/>
    <property type="evidence" value="ECO:0007669"/>
    <property type="project" value="UniProtKB-UniRule"/>
</dbReference>
<dbReference type="GO" id="GO:0016790">
    <property type="term" value="F:thiolester hydrolase activity"/>
    <property type="evidence" value="ECO:0007669"/>
    <property type="project" value="UniProtKB-UniRule"/>
</dbReference>
<dbReference type="GO" id="GO:0008270">
    <property type="term" value="F:zinc ion binding"/>
    <property type="evidence" value="ECO:0007669"/>
    <property type="project" value="UniProtKB-UniRule"/>
</dbReference>
<dbReference type="GO" id="GO:0006281">
    <property type="term" value="P:DNA repair"/>
    <property type="evidence" value="ECO:0007669"/>
    <property type="project" value="UniProtKB-UniRule"/>
</dbReference>
<dbReference type="GO" id="GO:0019243">
    <property type="term" value="P:methylglyoxal catabolic process to D-lactate via S-lactoyl-glutathione"/>
    <property type="evidence" value="ECO:0007669"/>
    <property type="project" value="TreeGrafter"/>
</dbReference>
<dbReference type="GO" id="GO:0030091">
    <property type="term" value="P:protein repair"/>
    <property type="evidence" value="ECO:0007669"/>
    <property type="project" value="UniProtKB-UniRule"/>
</dbReference>
<dbReference type="FunFam" id="3.40.50.880:FF:000026">
    <property type="entry name" value="Protein/nucleic acid deglycase HchA"/>
    <property type="match status" value="1"/>
</dbReference>
<dbReference type="Gene3D" id="3.40.50.880">
    <property type="match status" value="1"/>
</dbReference>
<dbReference type="HAMAP" id="MF_01046">
    <property type="entry name" value="Deglycase_HchA"/>
    <property type="match status" value="1"/>
</dbReference>
<dbReference type="InterPro" id="IPR029062">
    <property type="entry name" value="Class_I_gatase-like"/>
</dbReference>
<dbReference type="InterPro" id="IPR017283">
    <property type="entry name" value="HchA"/>
</dbReference>
<dbReference type="InterPro" id="IPR050325">
    <property type="entry name" value="Prot/Nucl_acid_deglycase"/>
</dbReference>
<dbReference type="NCBIfam" id="NF003168">
    <property type="entry name" value="PRK04155.1"/>
    <property type="match status" value="1"/>
</dbReference>
<dbReference type="PANTHER" id="PTHR48094">
    <property type="entry name" value="PROTEIN/NUCLEIC ACID DEGLYCASE DJ-1-RELATED"/>
    <property type="match status" value="1"/>
</dbReference>
<dbReference type="PANTHER" id="PTHR48094:SF20">
    <property type="entry name" value="PROTEIN_NUCLEIC ACID DEGLYCASE 1"/>
    <property type="match status" value="1"/>
</dbReference>
<dbReference type="PIRSF" id="PIRSF037798">
    <property type="entry name" value="Chaperone_HchA"/>
    <property type="match status" value="1"/>
</dbReference>
<dbReference type="SUPFAM" id="SSF52317">
    <property type="entry name" value="Class I glutamine amidotransferase-like"/>
    <property type="match status" value="1"/>
</dbReference>
<name>HCHA_ECOSM</name>
<comment type="function">
    <text evidence="1">Protein and nucleotide deglycase that catalyzes the deglycation of the Maillard adducts formed between amino groups of proteins or nucleotides and reactive carbonyl groups of glyoxals. Thus, functions as a protein deglycase that repairs methylglyoxal- and glyoxal-glycated proteins, and releases repaired proteins and lactate or glycolate, respectively. Deglycates cysteine, arginine and lysine residues in proteins, and thus reactivates these proteins by reversing glycation by glyoxals. Acts on early glycation intermediates (hemithioacetals and aminocarbinols), preventing the formation of Schiff bases and advanced glycation endproducts (AGE). Also functions as a nucleotide deglycase able to repair glycated guanine in the free nucleotide pool (GTP, GDP, GMP, dGTP) and in DNA and RNA. Is thus involved in a major nucleotide repair system named guanine glycation repair (GG repair), dedicated to reversing methylglyoxal and glyoxal damage via nucleotide sanitization and direct nucleic acid repair. Plays an important role in protecting cells from carbonyl stress.</text>
</comment>
<comment type="catalytic activity">
    <reaction evidence="1">
        <text>N(omega)-(1-hydroxy-2-oxopropyl)-L-arginyl-[protein] + H2O = lactate + L-arginyl-[protein] + H(+)</text>
        <dbReference type="Rhea" id="RHEA:49548"/>
        <dbReference type="Rhea" id="RHEA-COMP:10532"/>
        <dbReference type="Rhea" id="RHEA-COMP:12428"/>
        <dbReference type="ChEBI" id="CHEBI:15377"/>
        <dbReference type="ChEBI" id="CHEBI:15378"/>
        <dbReference type="ChEBI" id="CHEBI:24996"/>
        <dbReference type="ChEBI" id="CHEBI:29965"/>
        <dbReference type="ChEBI" id="CHEBI:131708"/>
        <dbReference type="EC" id="3.5.1.124"/>
    </reaction>
</comment>
<comment type="catalytic activity">
    <reaction evidence="1">
        <text>N(6)-(1-hydroxy-2-oxopropyl)-L-lysyl-[protein] + H2O = lactate + L-lysyl-[protein] + H(+)</text>
        <dbReference type="Rhea" id="RHEA:49552"/>
        <dbReference type="Rhea" id="RHEA-COMP:9752"/>
        <dbReference type="Rhea" id="RHEA-COMP:12429"/>
        <dbReference type="ChEBI" id="CHEBI:15377"/>
        <dbReference type="ChEBI" id="CHEBI:15378"/>
        <dbReference type="ChEBI" id="CHEBI:24996"/>
        <dbReference type="ChEBI" id="CHEBI:29969"/>
        <dbReference type="ChEBI" id="CHEBI:131709"/>
        <dbReference type="EC" id="3.5.1.124"/>
    </reaction>
</comment>
<comment type="catalytic activity">
    <reaction evidence="1">
        <text>S-(1-hydroxy-2-oxopropyl)-L-cysteinyl-[protein] + H2O = lactate + L-cysteinyl-[protein] + H(+)</text>
        <dbReference type="Rhea" id="RHEA:49556"/>
        <dbReference type="Rhea" id="RHEA-COMP:10131"/>
        <dbReference type="Rhea" id="RHEA-COMP:12430"/>
        <dbReference type="ChEBI" id="CHEBI:15377"/>
        <dbReference type="ChEBI" id="CHEBI:15378"/>
        <dbReference type="ChEBI" id="CHEBI:24996"/>
        <dbReference type="ChEBI" id="CHEBI:29950"/>
        <dbReference type="ChEBI" id="CHEBI:131710"/>
        <dbReference type="EC" id="3.5.1.124"/>
    </reaction>
</comment>
<comment type="catalytic activity">
    <reaction evidence="1">
        <text>N(omega)-(1-hydroxy-2-oxoethyl)-L-arginyl-[protein] + H2O = L-arginyl-[protein] + glycolate + H(+)</text>
        <dbReference type="Rhea" id="RHEA:57188"/>
        <dbReference type="Rhea" id="RHEA-COMP:10532"/>
        <dbReference type="Rhea" id="RHEA-COMP:14844"/>
        <dbReference type="ChEBI" id="CHEBI:15377"/>
        <dbReference type="ChEBI" id="CHEBI:15378"/>
        <dbReference type="ChEBI" id="CHEBI:29805"/>
        <dbReference type="ChEBI" id="CHEBI:29965"/>
        <dbReference type="ChEBI" id="CHEBI:141553"/>
        <dbReference type="EC" id="3.5.1.124"/>
    </reaction>
</comment>
<comment type="catalytic activity">
    <reaction evidence="1">
        <text>N(6)-(1-hydroxy-2-oxoethyl)-L-lysyl-[protein] + H2O = glycolate + L-lysyl-[protein] + H(+)</text>
        <dbReference type="Rhea" id="RHEA:57192"/>
        <dbReference type="Rhea" id="RHEA-COMP:9752"/>
        <dbReference type="Rhea" id="RHEA-COMP:14845"/>
        <dbReference type="ChEBI" id="CHEBI:15377"/>
        <dbReference type="ChEBI" id="CHEBI:15378"/>
        <dbReference type="ChEBI" id="CHEBI:29805"/>
        <dbReference type="ChEBI" id="CHEBI:29969"/>
        <dbReference type="ChEBI" id="CHEBI:141554"/>
        <dbReference type="EC" id="3.5.1.124"/>
    </reaction>
</comment>
<comment type="catalytic activity">
    <reaction evidence="1">
        <text>S-(1-hydroxy-2-oxoethyl)-L-cysteinyl-[protein] + H2O = glycolate + L-cysteinyl-[protein] + H(+)</text>
        <dbReference type="Rhea" id="RHEA:57196"/>
        <dbReference type="Rhea" id="RHEA-COMP:10131"/>
        <dbReference type="Rhea" id="RHEA-COMP:14846"/>
        <dbReference type="ChEBI" id="CHEBI:15377"/>
        <dbReference type="ChEBI" id="CHEBI:15378"/>
        <dbReference type="ChEBI" id="CHEBI:29805"/>
        <dbReference type="ChEBI" id="CHEBI:29950"/>
        <dbReference type="ChEBI" id="CHEBI:141555"/>
        <dbReference type="EC" id="3.5.1.124"/>
    </reaction>
</comment>
<comment type="catalytic activity">
    <reaction evidence="1">
        <text>N(2)-(1-hydroxy-2-oxopropyl)-dGTP + H2O = lactate + dGTP + H(+)</text>
        <dbReference type="Rhea" id="RHEA:57244"/>
        <dbReference type="ChEBI" id="CHEBI:15377"/>
        <dbReference type="ChEBI" id="CHEBI:15378"/>
        <dbReference type="ChEBI" id="CHEBI:24996"/>
        <dbReference type="ChEBI" id="CHEBI:61429"/>
        <dbReference type="ChEBI" id="CHEBI:141569"/>
    </reaction>
</comment>
<comment type="catalytic activity">
    <reaction evidence="1">
        <text>N(2)-(1-hydroxy-2-oxopropyl)-GTP + H2O = lactate + GTP + H(+)</text>
        <dbReference type="Rhea" id="RHEA:57256"/>
        <dbReference type="ChEBI" id="CHEBI:15377"/>
        <dbReference type="ChEBI" id="CHEBI:15378"/>
        <dbReference type="ChEBI" id="CHEBI:24996"/>
        <dbReference type="ChEBI" id="CHEBI:37565"/>
        <dbReference type="ChEBI" id="CHEBI:141570"/>
    </reaction>
</comment>
<comment type="catalytic activity">
    <reaction evidence="1">
        <text>N(2)-(1-hydroxy-2-oxopropyl)-GDP + H2O = lactate + GDP + H(+)</text>
        <dbReference type="Rhea" id="RHEA:57260"/>
        <dbReference type="ChEBI" id="CHEBI:15377"/>
        <dbReference type="ChEBI" id="CHEBI:15378"/>
        <dbReference type="ChEBI" id="CHEBI:24996"/>
        <dbReference type="ChEBI" id="CHEBI:58189"/>
        <dbReference type="ChEBI" id="CHEBI:141573"/>
    </reaction>
</comment>
<comment type="catalytic activity">
    <reaction evidence="1">
        <text>N(2)-(1-hydroxy-2-oxopropyl)-GMP + H2O = lactate + GMP + H(+)</text>
        <dbReference type="Rhea" id="RHEA:57268"/>
        <dbReference type="ChEBI" id="CHEBI:15377"/>
        <dbReference type="ChEBI" id="CHEBI:15378"/>
        <dbReference type="ChEBI" id="CHEBI:24996"/>
        <dbReference type="ChEBI" id="CHEBI:58115"/>
        <dbReference type="ChEBI" id="CHEBI:141575"/>
    </reaction>
</comment>
<comment type="catalytic activity">
    <reaction evidence="1">
        <text>N(2)-(1-hydroxy-2-oxoethyl)-dGTP + H2O = dGTP + glycolate + H(+)</text>
        <dbReference type="Rhea" id="RHEA:57248"/>
        <dbReference type="ChEBI" id="CHEBI:15377"/>
        <dbReference type="ChEBI" id="CHEBI:15378"/>
        <dbReference type="ChEBI" id="CHEBI:29805"/>
        <dbReference type="ChEBI" id="CHEBI:61429"/>
        <dbReference type="ChEBI" id="CHEBI:141572"/>
    </reaction>
</comment>
<comment type="catalytic activity">
    <reaction evidence="1">
        <text>N(2)-(1-hydroxy-2-oxoethyl)-GTP + H2O = glycolate + GTP + H(+)</text>
        <dbReference type="Rhea" id="RHEA:57252"/>
        <dbReference type="ChEBI" id="CHEBI:15377"/>
        <dbReference type="ChEBI" id="CHEBI:15378"/>
        <dbReference type="ChEBI" id="CHEBI:29805"/>
        <dbReference type="ChEBI" id="CHEBI:37565"/>
        <dbReference type="ChEBI" id="CHEBI:141571"/>
    </reaction>
</comment>
<comment type="catalytic activity">
    <reaction evidence="1">
        <text>N(2)-(1-hydroxy-2-oxoethyl)-GDP + H2O = glycolate + GDP + H(+)</text>
        <dbReference type="Rhea" id="RHEA:57264"/>
        <dbReference type="ChEBI" id="CHEBI:15377"/>
        <dbReference type="ChEBI" id="CHEBI:15378"/>
        <dbReference type="ChEBI" id="CHEBI:29805"/>
        <dbReference type="ChEBI" id="CHEBI:58189"/>
        <dbReference type="ChEBI" id="CHEBI:141574"/>
    </reaction>
</comment>
<comment type="catalytic activity">
    <reaction evidence="1">
        <text>N(2)-(1-hydroxy-2-oxoethyl)-GMP + H2O = glycolate + GMP + H(+)</text>
        <dbReference type="Rhea" id="RHEA:57304"/>
        <dbReference type="ChEBI" id="CHEBI:15377"/>
        <dbReference type="ChEBI" id="CHEBI:15378"/>
        <dbReference type="ChEBI" id="CHEBI:29805"/>
        <dbReference type="ChEBI" id="CHEBI:58115"/>
        <dbReference type="ChEBI" id="CHEBI:141576"/>
    </reaction>
</comment>
<comment type="catalytic activity">
    <reaction evidence="1">
        <text>an N(2)-(1-hydroxy-2-oxopropyl)-guanosine in RNA + H2O = a guanosine in RNA + lactate + H(+)</text>
        <dbReference type="Rhea" id="RHEA:57288"/>
        <dbReference type="Rhea" id="RHEA-COMP:14855"/>
        <dbReference type="Rhea" id="RHEA-COMP:14858"/>
        <dbReference type="ChEBI" id="CHEBI:15377"/>
        <dbReference type="ChEBI" id="CHEBI:15378"/>
        <dbReference type="ChEBI" id="CHEBI:24996"/>
        <dbReference type="ChEBI" id="CHEBI:74269"/>
        <dbReference type="ChEBI" id="CHEBI:141580"/>
    </reaction>
</comment>
<comment type="catalytic activity">
    <reaction evidence="1">
        <text>an N(2)-(1-hydroxy-2-oxopropyl)-2'-deoxyguanosine in DNA + H2O = a 2'-deoxyguanosine in DNA + lactate + H(+)</text>
        <dbReference type="Rhea" id="RHEA:57300"/>
        <dbReference type="Rhea" id="RHEA-COMP:11367"/>
        <dbReference type="Rhea" id="RHEA-COMP:14856"/>
        <dbReference type="ChEBI" id="CHEBI:15377"/>
        <dbReference type="ChEBI" id="CHEBI:15378"/>
        <dbReference type="ChEBI" id="CHEBI:24996"/>
        <dbReference type="ChEBI" id="CHEBI:85445"/>
        <dbReference type="ChEBI" id="CHEBI:141578"/>
    </reaction>
</comment>
<comment type="catalytic activity">
    <reaction evidence="1">
        <text>an N(2)-(1-hydroxy-2-oxoethyl)-guanosine in RNA + H2O = a guanosine in RNA + glycolate + H(+)</text>
        <dbReference type="Rhea" id="RHEA:57292"/>
        <dbReference type="Rhea" id="RHEA-COMP:14855"/>
        <dbReference type="Rhea" id="RHEA-COMP:14859"/>
        <dbReference type="ChEBI" id="CHEBI:15377"/>
        <dbReference type="ChEBI" id="CHEBI:15378"/>
        <dbReference type="ChEBI" id="CHEBI:29805"/>
        <dbReference type="ChEBI" id="CHEBI:74269"/>
        <dbReference type="ChEBI" id="CHEBI:141581"/>
    </reaction>
</comment>
<comment type="catalytic activity">
    <reaction evidence="1">
        <text>an N(2)-(1-hydroxy-2-oxoethyl)-2'-deoxyguanosine in DNA + H2O = a 2'-deoxyguanosine in DNA + glycolate + H(+)</text>
        <dbReference type="Rhea" id="RHEA:57296"/>
        <dbReference type="Rhea" id="RHEA-COMP:11367"/>
        <dbReference type="Rhea" id="RHEA-COMP:14857"/>
        <dbReference type="ChEBI" id="CHEBI:15377"/>
        <dbReference type="ChEBI" id="CHEBI:15378"/>
        <dbReference type="ChEBI" id="CHEBI:29805"/>
        <dbReference type="ChEBI" id="CHEBI:85445"/>
        <dbReference type="ChEBI" id="CHEBI:141579"/>
    </reaction>
</comment>
<comment type="subunit">
    <text evidence="1">Homodimer.</text>
</comment>
<comment type="subcellular location">
    <subcellularLocation>
        <location evidence="1">Cytoplasm</location>
    </subcellularLocation>
</comment>
<comment type="induction">
    <text evidence="1">By heat shock.</text>
</comment>
<comment type="similarity">
    <text evidence="1">Belongs to the peptidase C56 family. HchA subfamily.</text>
</comment>
<accession>B1LQP2</accession>
<keyword id="KW-0963">Cytoplasm</keyword>
<keyword id="KW-0227">DNA damage</keyword>
<keyword id="KW-0234">DNA repair</keyword>
<keyword id="KW-0378">Hydrolase</keyword>
<keyword id="KW-0479">Metal-binding</keyword>
<keyword id="KW-0346">Stress response</keyword>
<keyword id="KW-0862">Zinc</keyword>
<gene>
    <name evidence="1" type="primary">hchA</name>
    <name type="ordered locus">EcSMS35_1218</name>
</gene>
<feature type="chain" id="PRO_1000136181" description="Protein/nucleic acid deglycase HchA">
    <location>
        <begin position="1"/>
        <end position="283"/>
    </location>
</feature>
<feature type="active site" description="Nucleophile" evidence="1">
    <location>
        <position position="185"/>
    </location>
</feature>
<feature type="binding site" evidence="1">
    <location>
        <position position="86"/>
    </location>
    <ligand>
        <name>Zn(2+)</name>
        <dbReference type="ChEBI" id="CHEBI:29105"/>
    </ligand>
</feature>
<feature type="binding site" evidence="1">
    <location>
        <position position="91"/>
    </location>
    <ligand>
        <name>Zn(2+)</name>
        <dbReference type="ChEBI" id="CHEBI:29105"/>
    </ligand>
</feature>
<feature type="binding site" evidence="1">
    <location>
        <position position="123"/>
    </location>
    <ligand>
        <name>Zn(2+)</name>
        <dbReference type="ChEBI" id="CHEBI:29105"/>
    </ligand>
</feature>
<protein>
    <recommendedName>
        <fullName evidence="1">Protein/nucleic acid deglycase HchA</fullName>
        <ecNumber evidence="1">3.1.2.-</ecNumber>
        <ecNumber evidence="1">3.5.1.-</ecNumber>
        <ecNumber evidence="1">3.5.1.124</ecNumber>
    </recommendedName>
    <alternativeName>
        <fullName evidence="1">Maillard deglycase</fullName>
    </alternativeName>
</protein>
<reference key="1">
    <citation type="journal article" date="2008" name="J. Bacteriol.">
        <title>Insights into the environmental resistance gene pool from the genome sequence of the multidrug-resistant environmental isolate Escherichia coli SMS-3-5.</title>
        <authorList>
            <person name="Fricke W.F."/>
            <person name="Wright M.S."/>
            <person name="Lindell A.H."/>
            <person name="Harkins D.M."/>
            <person name="Baker-Austin C."/>
            <person name="Ravel J."/>
            <person name="Stepanauskas R."/>
        </authorList>
    </citation>
    <scope>NUCLEOTIDE SEQUENCE [LARGE SCALE GENOMIC DNA]</scope>
    <source>
        <strain>SMS-3-5 / SECEC</strain>
    </source>
</reference>
<evidence type="ECO:0000255" key="1">
    <source>
        <dbReference type="HAMAP-Rule" id="MF_01046"/>
    </source>
</evidence>
<sequence>MTVQTSKNPQVDIAEDNAFFPSEYSLSQYTSPVSDLDGVDYPKPYRGKHKILVIAADERYLPTDNGKLFSTGNHPIETLLPLYHLHAAGFEFEVATISGLMTKFEYWAMPHKDEKVMPFFEQHKSLFRNPKKLADVVASLNADSEYAAIFVPGGHGALIGLPESQDVAAALQWAIKNDRFVISLCHGPAAFLALRHGDNPLNGYSICAFPDAADKQTPEIGYMPGHLTWYFGEELKKMGMNIINDDITGRVHKDRKVLTGDSPFAANALGKLAAQEMLAAYAG</sequence>
<proteinExistence type="inferred from homology"/>